<reference key="1">
    <citation type="submission" date="1999-08" db="EMBL/GenBank/DDBJ databases">
        <title>Homo sapiens normal aorta mRNA MST128.</title>
        <authorList>
            <person name="Hui R.T."/>
            <person name="Liu Y.Q."/>
            <person name="Liu B."/>
            <person name="Zhao B."/>
            <person name="Wang X.Y."/>
            <person name="Qin B.M."/>
            <person name="Sheng H."/>
            <person name="Zhang Q."/>
            <person name="Song L."/>
            <person name="Liu B.H."/>
            <person name="Lu H."/>
            <person name="Xu H.S."/>
            <person name="Zheng W.Y."/>
            <person name="Gong J."/>
        </authorList>
    </citation>
    <scope>NUCLEOTIDE SEQUENCE [LARGE SCALE MRNA]</scope>
    <source>
        <tissue>Aorta</tissue>
    </source>
</reference>
<reference key="2">
    <citation type="journal article" date="2006" name="Nature">
        <title>The DNA sequence and biological annotation of human chromosome 1.</title>
        <authorList>
            <person name="Gregory S.G."/>
            <person name="Barlow K.F."/>
            <person name="McLay K.E."/>
            <person name="Kaul R."/>
            <person name="Swarbreck D."/>
            <person name="Dunham A."/>
            <person name="Scott C.E."/>
            <person name="Howe K.L."/>
            <person name="Woodfine K."/>
            <person name="Spencer C.C.A."/>
            <person name="Jones M.C."/>
            <person name="Gillson C."/>
            <person name="Searle S."/>
            <person name="Zhou Y."/>
            <person name="Kokocinski F."/>
            <person name="McDonald L."/>
            <person name="Evans R."/>
            <person name="Phillips K."/>
            <person name="Atkinson A."/>
            <person name="Cooper R."/>
            <person name="Jones C."/>
            <person name="Hall R.E."/>
            <person name="Andrews T.D."/>
            <person name="Lloyd C."/>
            <person name="Ainscough R."/>
            <person name="Almeida J.P."/>
            <person name="Ambrose K.D."/>
            <person name="Anderson F."/>
            <person name="Andrew R.W."/>
            <person name="Ashwell R.I.S."/>
            <person name="Aubin K."/>
            <person name="Babbage A.K."/>
            <person name="Bagguley C.L."/>
            <person name="Bailey J."/>
            <person name="Beasley H."/>
            <person name="Bethel G."/>
            <person name="Bird C.P."/>
            <person name="Bray-Allen S."/>
            <person name="Brown J.Y."/>
            <person name="Brown A.J."/>
            <person name="Buckley D."/>
            <person name="Burton J."/>
            <person name="Bye J."/>
            <person name="Carder C."/>
            <person name="Chapman J.C."/>
            <person name="Clark S.Y."/>
            <person name="Clarke G."/>
            <person name="Clee C."/>
            <person name="Cobley V."/>
            <person name="Collier R.E."/>
            <person name="Corby N."/>
            <person name="Coville G.J."/>
            <person name="Davies J."/>
            <person name="Deadman R."/>
            <person name="Dunn M."/>
            <person name="Earthrowl M."/>
            <person name="Ellington A.G."/>
            <person name="Errington H."/>
            <person name="Frankish A."/>
            <person name="Frankland J."/>
            <person name="French L."/>
            <person name="Garner P."/>
            <person name="Garnett J."/>
            <person name="Gay L."/>
            <person name="Ghori M.R.J."/>
            <person name="Gibson R."/>
            <person name="Gilby L.M."/>
            <person name="Gillett W."/>
            <person name="Glithero R.J."/>
            <person name="Grafham D.V."/>
            <person name="Griffiths C."/>
            <person name="Griffiths-Jones S."/>
            <person name="Grocock R."/>
            <person name="Hammond S."/>
            <person name="Harrison E.S.I."/>
            <person name="Hart E."/>
            <person name="Haugen E."/>
            <person name="Heath P.D."/>
            <person name="Holmes S."/>
            <person name="Holt K."/>
            <person name="Howden P.J."/>
            <person name="Hunt A.R."/>
            <person name="Hunt S.E."/>
            <person name="Hunter G."/>
            <person name="Isherwood J."/>
            <person name="James R."/>
            <person name="Johnson C."/>
            <person name="Johnson D."/>
            <person name="Joy A."/>
            <person name="Kay M."/>
            <person name="Kershaw J.K."/>
            <person name="Kibukawa M."/>
            <person name="Kimberley A.M."/>
            <person name="King A."/>
            <person name="Knights A.J."/>
            <person name="Lad H."/>
            <person name="Laird G."/>
            <person name="Lawlor S."/>
            <person name="Leongamornlert D.A."/>
            <person name="Lloyd D.M."/>
            <person name="Loveland J."/>
            <person name="Lovell J."/>
            <person name="Lush M.J."/>
            <person name="Lyne R."/>
            <person name="Martin S."/>
            <person name="Mashreghi-Mohammadi M."/>
            <person name="Matthews L."/>
            <person name="Matthews N.S.W."/>
            <person name="McLaren S."/>
            <person name="Milne S."/>
            <person name="Mistry S."/>
            <person name="Moore M.J.F."/>
            <person name="Nickerson T."/>
            <person name="O'Dell C.N."/>
            <person name="Oliver K."/>
            <person name="Palmeiri A."/>
            <person name="Palmer S.A."/>
            <person name="Parker A."/>
            <person name="Patel D."/>
            <person name="Pearce A.V."/>
            <person name="Peck A.I."/>
            <person name="Pelan S."/>
            <person name="Phelps K."/>
            <person name="Phillimore B.J."/>
            <person name="Plumb R."/>
            <person name="Rajan J."/>
            <person name="Raymond C."/>
            <person name="Rouse G."/>
            <person name="Saenphimmachak C."/>
            <person name="Sehra H.K."/>
            <person name="Sheridan E."/>
            <person name="Shownkeen R."/>
            <person name="Sims S."/>
            <person name="Skuce C.D."/>
            <person name="Smith M."/>
            <person name="Steward C."/>
            <person name="Subramanian S."/>
            <person name="Sycamore N."/>
            <person name="Tracey A."/>
            <person name="Tromans A."/>
            <person name="Van Helmond Z."/>
            <person name="Wall M."/>
            <person name="Wallis J.M."/>
            <person name="White S."/>
            <person name="Whitehead S.L."/>
            <person name="Wilkinson J.E."/>
            <person name="Willey D.L."/>
            <person name="Williams H."/>
            <person name="Wilming L."/>
            <person name="Wray P.W."/>
            <person name="Wu Z."/>
            <person name="Coulson A."/>
            <person name="Vaudin M."/>
            <person name="Sulston J.E."/>
            <person name="Durbin R.M."/>
            <person name="Hubbard T."/>
            <person name="Wooster R."/>
            <person name="Dunham I."/>
            <person name="Carter N.P."/>
            <person name="McVean G."/>
            <person name="Ross M.T."/>
            <person name="Harrow J."/>
            <person name="Olson M.V."/>
            <person name="Beck S."/>
            <person name="Rogers J."/>
            <person name="Bentley D.R."/>
        </authorList>
    </citation>
    <scope>NUCLEOTIDE SEQUENCE [LARGE SCALE GENOMIC DNA]</scope>
</reference>
<sequence>MWGFLVLKARWLVTPVRTLATEAGQKPSLRGLLDVGNIQHRAARARGLTRGVIRVSPQERSQQNQSAPKGPTPSTRPKPRTLGPQAHSLALQSVDLLFRP</sequence>
<organism>
    <name type="scientific">Homo sapiens</name>
    <name type="common">Human</name>
    <dbReference type="NCBI Taxonomy" id="9606"/>
    <lineage>
        <taxon>Eukaryota</taxon>
        <taxon>Metazoa</taxon>
        <taxon>Chordata</taxon>
        <taxon>Craniata</taxon>
        <taxon>Vertebrata</taxon>
        <taxon>Euteleostomi</taxon>
        <taxon>Mammalia</taxon>
        <taxon>Eutheria</taxon>
        <taxon>Euarchontoglires</taxon>
        <taxon>Primates</taxon>
        <taxon>Haplorrhini</taxon>
        <taxon>Catarrhini</taxon>
        <taxon>Hominidae</taxon>
        <taxon>Homo</taxon>
    </lineage>
</organism>
<dbReference type="EMBL" id="AF176918">
    <property type="protein sequence ID" value="AAQ13662.1"/>
    <property type="molecule type" value="mRNA"/>
</dbReference>
<dbReference type="EMBL" id="AL161644">
    <property type="status" value="NOT_ANNOTATED_CDS"/>
    <property type="molecule type" value="Genomic_DNA"/>
</dbReference>
<dbReference type="SMR" id="Q7Z2R9"/>
<dbReference type="GlyCosmos" id="Q7Z2R9">
    <property type="glycosylation" value="1 site, No reported glycans"/>
</dbReference>
<dbReference type="GlyGen" id="Q7Z2R9">
    <property type="glycosylation" value="2 sites"/>
</dbReference>
<dbReference type="BioMuta" id="HGNC:32328"/>
<dbReference type="ProteomicsDB" id="68966"/>
<dbReference type="AGR" id="HGNC:32328"/>
<dbReference type="GeneCards" id="SSBP3-AS1"/>
<dbReference type="HGNC" id="HGNC:32328">
    <property type="gene designation" value="SSBP3-AS1"/>
</dbReference>
<dbReference type="neXtProt" id="NX_Q7Z2R9"/>
<dbReference type="InParanoid" id="Q7Z2R9"/>
<dbReference type="PAN-GO" id="Q7Z2R9">
    <property type="GO annotations" value="0 GO annotations based on evolutionary models"/>
</dbReference>
<dbReference type="PhylomeDB" id="Q7Z2R9"/>
<dbReference type="ChiTaRS" id="SSBP3-AS1">
    <property type="organism name" value="human"/>
</dbReference>
<dbReference type="Pharos" id="Q7Z2R9">
    <property type="development level" value="Tdark"/>
</dbReference>
<dbReference type="Proteomes" id="UP000005640">
    <property type="component" value="Unplaced"/>
</dbReference>
<dbReference type="RNAct" id="Q7Z2R9">
    <property type="molecule type" value="protein"/>
</dbReference>
<dbReference type="GO" id="GO:0005576">
    <property type="term" value="C:extracellular region"/>
    <property type="evidence" value="ECO:0007669"/>
    <property type="project" value="UniProtKB-SubCell"/>
</dbReference>
<gene>
    <name type="primary">SSBP3-AS1</name>
    <name type="synonym">C1orf191</name>
    <name type="ORF">MSTP128</name>
</gene>
<feature type="signal peptide" evidence="1">
    <location>
        <begin position="1"/>
        <end position="18"/>
    </location>
</feature>
<feature type="chain" id="PRO_0000271114" description="Putative uncharacterized protein SSBP3-AS1">
    <location>
        <begin position="19"/>
        <end position="100"/>
    </location>
</feature>
<feature type="region of interest" description="Disordered" evidence="2">
    <location>
        <begin position="48"/>
        <end position="86"/>
    </location>
</feature>
<feature type="compositionally biased region" description="Polar residues" evidence="2">
    <location>
        <begin position="58"/>
        <end position="69"/>
    </location>
</feature>
<feature type="glycosylation site" description="N-linked (GlcNAc...) asparagine" evidence="1">
    <location>
        <position position="64"/>
    </location>
</feature>
<comment type="subcellular location">
    <subcellularLocation>
        <location evidence="3">Secreted</location>
    </subcellularLocation>
</comment>
<comment type="caution">
    <text evidence="3">Product of a dubious CDS prediction. Encoded in an intron of the SSBP3 gene (opposite strand).</text>
</comment>
<accession>Q7Z2R9</accession>
<evidence type="ECO:0000255" key="1"/>
<evidence type="ECO:0000256" key="2">
    <source>
        <dbReference type="SAM" id="MobiDB-lite"/>
    </source>
</evidence>
<evidence type="ECO:0000305" key="3"/>
<proteinExistence type="uncertain"/>
<name>SSAS1_HUMAN</name>
<keyword id="KW-0325">Glycoprotein</keyword>
<keyword id="KW-1185">Reference proteome</keyword>
<keyword id="KW-0964">Secreted</keyword>
<keyword id="KW-0732">Signal</keyword>
<protein>
    <recommendedName>
        <fullName>Putative uncharacterized protein SSBP3-AS1</fullName>
    </recommendedName>
    <alternativeName>
        <fullName>SSBP3 antisense RNA 1</fullName>
    </alternativeName>
    <alternativeName>
        <fullName>SSBP3 antisense gene protein 1</fullName>
    </alternativeName>
</protein>